<name>PSRP_BORPA</name>
<comment type="function">
    <text evidence="1">Bifunctional serine/threonine kinase and phosphorylase involved in the regulation of the phosphoenolpyruvate synthase (PEPS) by catalyzing its phosphorylation/dephosphorylation.</text>
</comment>
<comment type="catalytic activity">
    <reaction evidence="1">
        <text>[pyruvate, water dikinase] + ADP = [pyruvate, water dikinase]-phosphate + AMP + H(+)</text>
        <dbReference type="Rhea" id="RHEA:46020"/>
        <dbReference type="Rhea" id="RHEA-COMP:11425"/>
        <dbReference type="Rhea" id="RHEA-COMP:11426"/>
        <dbReference type="ChEBI" id="CHEBI:15378"/>
        <dbReference type="ChEBI" id="CHEBI:43176"/>
        <dbReference type="ChEBI" id="CHEBI:68546"/>
        <dbReference type="ChEBI" id="CHEBI:456215"/>
        <dbReference type="ChEBI" id="CHEBI:456216"/>
        <dbReference type="EC" id="2.7.11.33"/>
    </reaction>
</comment>
<comment type="catalytic activity">
    <reaction evidence="1">
        <text>[pyruvate, water dikinase]-phosphate + phosphate + H(+) = [pyruvate, water dikinase] + diphosphate</text>
        <dbReference type="Rhea" id="RHEA:48580"/>
        <dbReference type="Rhea" id="RHEA-COMP:11425"/>
        <dbReference type="Rhea" id="RHEA-COMP:11426"/>
        <dbReference type="ChEBI" id="CHEBI:15378"/>
        <dbReference type="ChEBI" id="CHEBI:33019"/>
        <dbReference type="ChEBI" id="CHEBI:43176"/>
        <dbReference type="ChEBI" id="CHEBI:43474"/>
        <dbReference type="ChEBI" id="CHEBI:68546"/>
        <dbReference type="EC" id="2.7.4.28"/>
    </reaction>
</comment>
<comment type="similarity">
    <text evidence="1">Belongs to the pyruvate, phosphate/water dikinase regulatory protein family. PSRP subfamily.</text>
</comment>
<feature type="chain" id="PRO_0000196636" description="Putative phosphoenolpyruvate synthase regulatory protein">
    <location>
        <begin position="1"/>
        <end position="275"/>
    </location>
</feature>
<feature type="binding site" evidence="1">
    <location>
        <begin position="157"/>
        <end position="164"/>
    </location>
    <ligand>
        <name>ADP</name>
        <dbReference type="ChEBI" id="CHEBI:456216"/>
    </ligand>
</feature>
<dbReference type="EC" id="2.7.11.33" evidence="1"/>
<dbReference type="EC" id="2.7.4.28" evidence="1"/>
<dbReference type="EMBL" id="BX640427">
    <property type="protein sequence ID" value="CAE36845.1"/>
    <property type="molecule type" value="Genomic_DNA"/>
</dbReference>
<dbReference type="RefSeq" id="WP_003811765.1">
    <property type="nucleotide sequence ID" value="NC_002928.3"/>
</dbReference>
<dbReference type="SMR" id="Q7WA44"/>
<dbReference type="KEGG" id="bpa:BPP1543"/>
<dbReference type="HOGENOM" id="CLU_046206_1_0_4"/>
<dbReference type="Proteomes" id="UP000001421">
    <property type="component" value="Chromosome"/>
</dbReference>
<dbReference type="GO" id="GO:0043531">
    <property type="term" value="F:ADP binding"/>
    <property type="evidence" value="ECO:0007669"/>
    <property type="project" value="UniProtKB-UniRule"/>
</dbReference>
<dbReference type="GO" id="GO:0005524">
    <property type="term" value="F:ATP binding"/>
    <property type="evidence" value="ECO:0007669"/>
    <property type="project" value="InterPro"/>
</dbReference>
<dbReference type="GO" id="GO:0016776">
    <property type="term" value="F:phosphotransferase activity, phosphate group as acceptor"/>
    <property type="evidence" value="ECO:0007669"/>
    <property type="project" value="UniProtKB-UniRule"/>
</dbReference>
<dbReference type="GO" id="GO:0004674">
    <property type="term" value="F:protein serine/threonine kinase activity"/>
    <property type="evidence" value="ECO:0007669"/>
    <property type="project" value="UniProtKB-UniRule"/>
</dbReference>
<dbReference type="HAMAP" id="MF_01062">
    <property type="entry name" value="PSRP"/>
    <property type="match status" value="1"/>
</dbReference>
<dbReference type="InterPro" id="IPR005177">
    <property type="entry name" value="Kinase-pyrophosphorylase"/>
</dbReference>
<dbReference type="InterPro" id="IPR026530">
    <property type="entry name" value="PSRP"/>
</dbReference>
<dbReference type="NCBIfam" id="NF003742">
    <property type="entry name" value="PRK05339.1"/>
    <property type="match status" value="1"/>
</dbReference>
<dbReference type="PANTHER" id="PTHR31756">
    <property type="entry name" value="PYRUVATE, PHOSPHATE DIKINASE REGULATORY PROTEIN 1, CHLOROPLASTIC"/>
    <property type="match status" value="1"/>
</dbReference>
<dbReference type="PANTHER" id="PTHR31756:SF3">
    <property type="entry name" value="PYRUVATE, PHOSPHATE DIKINASE REGULATORY PROTEIN 1, CHLOROPLASTIC"/>
    <property type="match status" value="1"/>
</dbReference>
<dbReference type="Pfam" id="PF03618">
    <property type="entry name" value="Kinase-PPPase"/>
    <property type="match status" value="1"/>
</dbReference>
<reference key="1">
    <citation type="journal article" date="2003" name="Nat. Genet.">
        <title>Comparative analysis of the genome sequences of Bordetella pertussis, Bordetella parapertussis and Bordetella bronchiseptica.</title>
        <authorList>
            <person name="Parkhill J."/>
            <person name="Sebaihia M."/>
            <person name="Preston A."/>
            <person name="Murphy L.D."/>
            <person name="Thomson N.R."/>
            <person name="Harris D.E."/>
            <person name="Holden M.T.G."/>
            <person name="Churcher C.M."/>
            <person name="Bentley S.D."/>
            <person name="Mungall K.L."/>
            <person name="Cerdeno-Tarraga A.-M."/>
            <person name="Temple L."/>
            <person name="James K.D."/>
            <person name="Harris B."/>
            <person name="Quail M.A."/>
            <person name="Achtman M."/>
            <person name="Atkin R."/>
            <person name="Baker S."/>
            <person name="Basham D."/>
            <person name="Bason N."/>
            <person name="Cherevach I."/>
            <person name="Chillingworth T."/>
            <person name="Collins M."/>
            <person name="Cronin A."/>
            <person name="Davis P."/>
            <person name="Doggett J."/>
            <person name="Feltwell T."/>
            <person name="Goble A."/>
            <person name="Hamlin N."/>
            <person name="Hauser H."/>
            <person name="Holroyd S."/>
            <person name="Jagels K."/>
            <person name="Leather S."/>
            <person name="Moule S."/>
            <person name="Norberczak H."/>
            <person name="O'Neil S."/>
            <person name="Ormond D."/>
            <person name="Price C."/>
            <person name="Rabbinowitsch E."/>
            <person name="Rutter S."/>
            <person name="Sanders M."/>
            <person name="Saunders D."/>
            <person name="Seeger K."/>
            <person name="Sharp S."/>
            <person name="Simmonds M."/>
            <person name="Skelton J."/>
            <person name="Squares R."/>
            <person name="Squares S."/>
            <person name="Stevens K."/>
            <person name="Unwin L."/>
            <person name="Whitehead S."/>
            <person name="Barrell B.G."/>
            <person name="Maskell D.J."/>
        </authorList>
    </citation>
    <scope>NUCLEOTIDE SEQUENCE [LARGE SCALE GENOMIC DNA]</scope>
    <source>
        <strain>12822 / ATCC BAA-587 / NCTC 13253</strain>
    </source>
</reference>
<keyword id="KW-0418">Kinase</keyword>
<keyword id="KW-0547">Nucleotide-binding</keyword>
<keyword id="KW-0723">Serine/threonine-protein kinase</keyword>
<keyword id="KW-0808">Transferase</keyword>
<evidence type="ECO:0000255" key="1">
    <source>
        <dbReference type="HAMAP-Rule" id="MF_01062"/>
    </source>
</evidence>
<accession>Q7WA44</accession>
<sequence length="275" mass="30712">MTSTPIERAVYIVSDSTGITAETFSHSVLSQFDEVNFKPVRLPFIDTLDKAREVVARINRNALEAGVPPIVFSTLVNPEILALVRQSNGVFLDLFGTFVSHIEQALGLKSSHSIGRSHMAANSEKYRNRIDAINFSLAHDDGQFVNQLDQADVILVGVSRCGKTPTSLYLAMQYAVKAANFPLTPDDFERGALPKTIAPYRGKLFGLSIQPERLAEVRNERRPNSHYARLEQCRYEVAEAERMMRREGISWLSTTTKSIEEIATTVLQEVGLERV</sequence>
<protein>
    <recommendedName>
        <fullName evidence="1">Putative phosphoenolpyruvate synthase regulatory protein</fullName>
        <shortName evidence="1">PEP synthase regulatory protein</shortName>
        <shortName evidence="1">PSRP</shortName>
        <ecNumber evidence="1">2.7.11.33</ecNumber>
        <ecNumber evidence="1">2.7.4.28</ecNumber>
    </recommendedName>
    <alternativeName>
        <fullName evidence="1">Pyruvate, water dikinase regulatory protein</fullName>
    </alternativeName>
</protein>
<organism>
    <name type="scientific">Bordetella parapertussis (strain 12822 / ATCC BAA-587 / NCTC 13253)</name>
    <dbReference type="NCBI Taxonomy" id="257311"/>
    <lineage>
        <taxon>Bacteria</taxon>
        <taxon>Pseudomonadati</taxon>
        <taxon>Pseudomonadota</taxon>
        <taxon>Betaproteobacteria</taxon>
        <taxon>Burkholderiales</taxon>
        <taxon>Alcaligenaceae</taxon>
        <taxon>Bordetella</taxon>
    </lineage>
</organism>
<proteinExistence type="inferred from homology"/>
<gene>
    <name type="ordered locus">BPP1543</name>
</gene>